<protein>
    <recommendedName>
        <fullName evidence="1">Holliday junction branch migration complex subunit RuvA</fullName>
    </recommendedName>
</protein>
<feature type="chain" id="PRO_1000002410" description="Holliday junction branch migration complex subunit RuvA">
    <location>
        <begin position="1"/>
        <end position="193"/>
    </location>
</feature>
<feature type="region of interest" description="Domain I" evidence="1">
    <location>
        <begin position="1"/>
        <end position="64"/>
    </location>
</feature>
<feature type="region of interest" description="Domain II" evidence="1">
    <location>
        <begin position="65"/>
        <end position="139"/>
    </location>
</feature>
<feature type="region of interest" description="Flexible linker" evidence="1">
    <location>
        <begin position="139"/>
        <end position="143"/>
    </location>
</feature>
<feature type="region of interest" description="Domain III" evidence="1">
    <location>
        <begin position="144"/>
        <end position="193"/>
    </location>
</feature>
<dbReference type="EMBL" id="CP000440">
    <property type="protein sequence ID" value="ABI86141.1"/>
    <property type="molecule type" value="Genomic_DNA"/>
</dbReference>
<dbReference type="RefSeq" id="WP_011655984.1">
    <property type="nucleotide sequence ID" value="NZ_CP009798.1"/>
</dbReference>
<dbReference type="SMR" id="Q0BI82"/>
<dbReference type="GeneID" id="93084002"/>
<dbReference type="KEGG" id="bam:Bamb_0582"/>
<dbReference type="PATRIC" id="fig|339670.21.peg.1015"/>
<dbReference type="eggNOG" id="COG0632">
    <property type="taxonomic scope" value="Bacteria"/>
</dbReference>
<dbReference type="Proteomes" id="UP000000662">
    <property type="component" value="Chromosome 1"/>
</dbReference>
<dbReference type="GO" id="GO:0005737">
    <property type="term" value="C:cytoplasm"/>
    <property type="evidence" value="ECO:0007669"/>
    <property type="project" value="UniProtKB-SubCell"/>
</dbReference>
<dbReference type="GO" id="GO:0009379">
    <property type="term" value="C:Holliday junction helicase complex"/>
    <property type="evidence" value="ECO:0007669"/>
    <property type="project" value="InterPro"/>
</dbReference>
<dbReference type="GO" id="GO:0048476">
    <property type="term" value="C:Holliday junction resolvase complex"/>
    <property type="evidence" value="ECO:0007669"/>
    <property type="project" value="UniProtKB-UniRule"/>
</dbReference>
<dbReference type="GO" id="GO:0005524">
    <property type="term" value="F:ATP binding"/>
    <property type="evidence" value="ECO:0007669"/>
    <property type="project" value="InterPro"/>
</dbReference>
<dbReference type="GO" id="GO:0000400">
    <property type="term" value="F:four-way junction DNA binding"/>
    <property type="evidence" value="ECO:0007669"/>
    <property type="project" value="UniProtKB-UniRule"/>
</dbReference>
<dbReference type="GO" id="GO:0009378">
    <property type="term" value="F:four-way junction helicase activity"/>
    <property type="evidence" value="ECO:0007669"/>
    <property type="project" value="InterPro"/>
</dbReference>
<dbReference type="GO" id="GO:0006310">
    <property type="term" value="P:DNA recombination"/>
    <property type="evidence" value="ECO:0007669"/>
    <property type="project" value="UniProtKB-UniRule"/>
</dbReference>
<dbReference type="GO" id="GO:0006281">
    <property type="term" value="P:DNA repair"/>
    <property type="evidence" value="ECO:0007669"/>
    <property type="project" value="UniProtKB-UniRule"/>
</dbReference>
<dbReference type="CDD" id="cd14332">
    <property type="entry name" value="UBA_RuvA_C"/>
    <property type="match status" value="1"/>
</dbReference>
<dbReference type="Gene3D" id="1.10.150.20">
    <property type="entry name" value="5' to 3' exonuclease, C-terminal subdomain"/>
    <property type="match status" value="1"/>
</dbReference>
<dbReference type="Gene3D" id="1.10.8.10">
    <property type="entry name" value="DNA helicase RuvA subunit, C-terminal domain"/>
    <property type="match status" value="1"/>
</dbReference>
<dbReference type="Gene3D" id="2.40.50.140">
    <property type="entry name" value="Nucleic acid-binding proteins"/>
    <property type="match status" value="1"/>
</dbReference>
<dbReference type="HAMAP" id="MF_00031">
    <property type="entry name" value="DNA_HJ_migration_RuvA"/>
    <property type="match status" value="1"/>
</dbReference>
<dbReference type="InterPro" id="IPR013849">
    <property type="entry name" value="DNA_helicase_Holl-junc_RuvA_I"/>
</dbReference>
<dbReference type="InterPro" id="IPR003583">
    <property type="entry name" value="Hlx-hairpin-Hlx_DNA-bd_motif"/>
</dbReference>
<dbReference type="InterPro" id="IPR012340">
    <property type="entry name" value="NA-bd_OB-fold"/>
</dbReference>
<dbReference type="InterPro" id="IPR000085">
    <property type="entry name" value="RuvA"/>
</dbReference>
<dbReference type="InterPro" id="IPR010994">
    <property type="entry name" value="RuvA_2-like"/>
</dbReference>
<dbReference type="InterPro" id="IPR011114">
    <property type="entry name" value="RuvA_C"/>
</dbReference>
<dbReference type="InterPro" id="IPR036267">
    <property type="entry name" value="RuvA_C_sf"/>
</dbReference>
<dbReference type="NCBIfam" id="TIGR00084">
    <property type="entry name" value="ruvA"/>
    <property type="match status" value="1"/>
</dbReference>
<dbReference type="Pfam" id="PF14520">
    <property type="entry name" value="HHH_5"/>
    <property type="match status" value="1"/>
</dbReference>
<dbReference type="Pfam" id="PF07499">
    <property type="entry name" value="RuvA_C"/>
    <property type="match status" value="1"/>
</dbReference>
<dbReference type="Pfam" id="PF01330">
    <property type="entry name" value="RuvA_N"/>
    <property type="match status" value="1"/>
</dbReference>
<dbReference type="SMART" id="SM00278">
    <property type="entry name" value="HhH1"/>
    <property type="match status" value="2"/>
</dbReference>
<dbReference type="SUPFAM" id="SSF46929">
    <property type="entry name" value="DNA helicase RuvA subunit, C-terminal domain"/>
    <property type="match status" value="1"/>
</dbReference>
<dbReference type="SUPFAM" id="SSF50249">
    <property type="entry name" value="Nucleic acid-binding proteins"/>
    <property type="match status" value="1"/>
</dbReference>
<dbReference type="SUPFAM" id="SSF47781">
    <property type="entry name" value="RuvA domain 2-like"/>
    <property type="match status" value="1"/>
</dbReference>
<reference key="1">
    <citation type="submission" date="2006-08" db="EMBL/GenBank/DDBJ databases">
        <title>Complete sequence of chromosome 1 of Burkholderia cepacia AMMD.</title>
        <authorList>
            <person name="Copeland A."/>
            <person name="Lucas S."/>
            <person name="Lapidus A."/>
            <person name="Barry K."/>
            <person name="Detter J.C."/>
            <person name="Glavina del Rio T."/>
            <person name="Hammon N."/>
            <person name="Israni S."/>
            <person name="Pitluck S."/>
            <person name="Bruce D."/>
            <person name="Chain P."/>
            <person name="Malfatti S."/>
            <person name="Shin M."/>
            <person name="Vergez L."/>
            <person name="Schmutz J."/>
            <person name="Larimer F."/>
            <person name="Land M."/>
            <person name="Hauser L."/>
            <person name="Kyrpides N."/>
            <person name="Kim E."/>
            <person name="Parke J."/>
            <person name="Coenye T."/>
            <person name="Konstantinidis K."/>
            <person name="Ramette A."/>
            <person name="Tiedje J."/>
            <person name="Richardson P."/>
        </authorList>
    </citation>
    <scope>NUCLEOTIDE SEQUENCE [LARGE SCALE GENOMIC DNA]</scope>
    <source>
        <strain>ATCC BAA-244 / DSM 16087 / CCUG 44356 / LMG 19182 / AMMD</strain>
    </source>
</reference>
<gene>
    <name evidence="1" type="primary">ruvA</name>
    <name type="ordered locus">Bamb_0582</name>
</gene>
<keyword id="KW-0963">Cytoplasm</keyword>
<keyword id="KW-0227">DNA damage</keyword>
<keyword id="KW-0233">DNA recombination</keyword>
<keyword id="KW-0234">DNA repair</keyword>
<keyword id="KW-0238">DNA-binding</keyword>
<name>RUVA_BURCM</name>
<accession>Q0BI82</accession>
<comment type="function">
    <text evidence="1">The RuvA-RuvB-RuvC complex processes Holliday junction (HJ) DNA during genetic recombination and DNA repair, while the RuvA-RuvB complex plays an important role in the rescue of blocked DNA replication forks via replication fork reversal (RFR). RuvA specifically binds to HJ cruciform DNA, conferring on it an open structure. The RuvB hexamer acts as an ATP-dependent pump, pulling dsDNA into and through the RuvAB complex. HJ branch migration allows RuvC to scan DNA until it finds its consensus sequence, where it cleaves and resolves the cruciform DNA.</text>
</comment>
<comment type="subunit">
    <text evidence="1">Homotetramer. Forms an RuvA(8)-RuvB(12)-Holliday junction (HJ) complex. HJ DNA is sandwiched between 2 RuvA tetramers; dsDNA enters through RuvA and exits via RuvB. An RuvB hexamer assembles on each DNA strand where it exits the tetramer. Each RuvB hexamer is contacted by two RuvA subunits (via domain III) on 2 adjacent RuvB subunits; this complex drives branch migration. In the full resolvosome a probable DNA-RuvA(4)-RuvB(12)-RuvC(2) complex forms which resolves the HJ.</text>
</comment>
<comment type="subcellular location">
    <subcellularLocation>
        <location evidence="1">Cytoplasm</location>
    </subcellularLocation>
</comment>
<comment type="domain">
    <text evidence="1">Has three domains with a flexible linker between the domains II and III and assumes an 'L' shape. Domain III is highly mobile and contacts RuvB.</text>
</comment>
<comment type="similarity">
    <text evidence="1">Belongs to the RuvA family.</text>
</comment>
<proteinExistence type="inferred from homology"/>
<organism>
    <name type="scientific">Burkholderia ambifaria (strain ATCC BAA-244 / DSM 16087 / CCUG 44356 / LMG 19182 / AMMD)</name>
    <name type="common">Burkholderia cepacia (strain AMMD)</name>
    <dbReference type="NCBI Taxonomy" id="339670"/>
    <lineage>
        <taxon>Bacteria</taxon>
        <taxon>Pseudomonadati</taxon>
        <taxon>Pseudomonadota</taxon>
        <taxon>Betaproteobacteria</taxon>
        <taxon>Burkholderiales</taxon>
        <taxon>Burkholderiaceae</taxon>
        <taxon>Burkholderia</taxon>
        <taxon>Burkholderia cepacia complex</taxon>
    </lineage>
</organism>
<sequence length="193" mass="20426">MIGRIAGILLEKNPPHLLVDCNGVGYEIDVPMSTFYNLPQTGERVVLLTQQIVREDAHLLYGFLTPQERTTFRELLKITGIGARMALAVLSGMSVQELAQAVTMQDAARLTRLPGIGKKTAERLLLELKGKLGADLGALAGAASQSDHAADILNALVALGYSEKEGLAAIKNVPAGTGVSEGIKLALKALSKV</sequence>
<evidence type="ECO:0000255" key="1">
    <source>
        <dbReference type="HAMAP-Rule" id="MF_00031"/>
    </source>
</evidence>